<name>NCAP_TSWVL</name>
<comment type="function">
    <text evidence="1">Encapsidates the genome protecting it from nucleases. The encapsidated genomic RNA is termed the nucleocapsid (NC) and serves as template for transcription and replication. The NC have a helical organization.</text>
</comment>
<comment type="subunit">
    <text evidence="1">Homotrimer. Binds the viral genomic RNA.</text>
</comment>
<comment type="subcellular location">
    <subcellularLocation>
        <location evidence="1">Virion</location>
    </subcellularLocation>
    <text evidence="1">Located inside the virion, complexed with the viral RNA.</text>
</comment>
<comment type="domain">
    <text evidence="1">The N-terminus and C-terminus are involved in homooligomerization and play an essential role in viral RNA synthesis.</text>
</comment>
<comment type="similarity">
    <text evidence="2">Belongs to the tospovirus nucleocapsid protein family.</text>
</comment>
<gene>
    <name type="primary">N</name>
</gene>
<dbReference type="EMBL" id="D13926">
    <property type="protein sequence ID" value="BAA03025.1"/>
    <property type="molecule type" value="Genomic_RNA"/>
</dbReference>
<dbReference type="PIR" id="JQ0955">
    <property type="entry name" value="VHVUW1"/>
</dbReference>
<dbReference type="SMR" id="P26001"/>
<dbReference type="GO" id="GO:0019029">
    <property type="term" value="C:helical viral capsid"/>
    <property type="evidence" value="ECO:0007669"/>
    <property type="project" value="UniProtKB-KW"/>
</dbReference>
<dbReference type="GO" id="GO:1990904">
    <property type="term" value="C:ribonucleoprotein complex"/>
    <property type="evidence" value="ECO:0007669"/>
    <property type="project" value="UniProtKB-KW"/>
</dbReference>
<dbReference type="GO" id="GO:0019013">
    <property type="term" value="C:viral nucleocapsid"/>
    <property type="evidence" value="ECO:0007669"/>
    <property type="project" value="UniProtKB-KW"/>
</dbReference>
<dbReference type="GO" id="GO:0003723">
    <property type="term" value="F:RNA binding"/>
    <property type="evidence" value="ECO:0007669"/>
    <property type="project" value="UniProtKB-KW"/>
</dbReference>
<dbReference type="InterPro" id="IPR002517">
    <property type="entry name" value="Tospo_nucleocap"/>
</dbReference>
<dbReference type="Pfam" id="PF01533">
    <property type="entry name" value="Tospo_nucleocap"/>
    <property type="match status" value="1"/>
</dbReference>
<dbReference type="PIRSF" id="PIRSF003948">
    <property type="entry name" value="N_TospoV"/>
    <property type="match status" value="1"/>
</dbReference>
<organism>
    <name type="scientific">Tomato spotted wilt virus (strain Bulgarian L3)</name>
    <name type="common">TSWV</name>
    <dbReference type="NCBI Taxonomy" id="36415"/>
    <lineage>
        <taxon>Viruses</taxon>
        <taxon>Riboviria</taxon>
        <taxon>Orthornavirae</taxon>
        <taxon>Negarnaviricota</taxon>
        <taxon>Polyploviricotina</taxon>
        <taxon>Ellioviricetes</taxon>
        <taxon>Bunyavirales</taxon>
        <taxon>Tospoviridae</taxon>
        <taxon>Orthotospovirus</taxon>
        <taxon>Tomato spotted wilt virus</taxon>
    </lineage>
</organism>
<sequence length="258" mass="28903">MSKVKLTKESIVALLTQGKDLEFEEDQNLVAFNFKTFCLENLDQIKKMSVISCLTFLKNRQSIMKVIKQSDFTFGKITIKKTSDRIGATDMTFRRLDSLIRVRLVEETGNSENLNTIKSKIASHPLIQAYGLPLDDAKSVRLAIMLGGSLPLIASVDSFEMISVVLAIYQDAKYKDLGIDPKKYDTKEALGKVCTVLKSKAFEMNEDQVKKGKEYAAILSSSNPNAKGSIAMEHYSETLNKFYEMFGVKKQAKLTELA</sequence>
<keyword id="KW-0167">Capsid protein</keyword>
<keyword id="KW-1139">Helical capsid protein</keyword>
<keyword id="KW-0687">Ribonucleoprotein</keyword>
<keyword id="KW-0694">RNA-binding</keyword>
<keyword id="KW-0543">Viral nucleoprotein</keyword>
<keyword id="KW-0946">Virion</keyword>
<accession>P26001</accession>
<reference key="1">
    <citation type="journal article" date="1991" name="J. Gen. Virol.">
        <title>Cloning and sequencing of the S RNA from a Bulgarian isolate of tomato spotted wilt virus.</title>
        <authorList>
            <person name="Maiss E."/>
            <person name="Ivanova L."/>
            <person name="Breyel E."/>
            <person name="Adam G."/>
        </authorList>
    </citation>
    <scope>NUCLEOTIDE SEQUENCE [GENOMIC RNA]</scope>
</reference>
<evidence type="ECO:0000250" key="1">
    <source>
        <dbReference type="UniProtKB" id="P16495"/>
    </source>
</evidence>
<evidence type="ECO:0000305" key="2"/>
<feature type="chain" id="PRO_0000222004" description="Nucleoprotein">
    <location>
        <begin position="1"/>
        <end position="258"/>
    </location>
</feature>
<organismHost>
    <name type="scientific">Frankliniella occidentalis</name>
    <name type="common">Western flower thrips</name>
    <name type="synonym">Euthrips occidentalis</name>
    <dbReference type="NCBI Taxonomy" id="133901"/>
</organismHost>
<organismHost>
    <name type="scientific">Scirtothrips dorsalis</name>
    <name type="common">Chilli thrips</name>
    <dbReference type="NCBI Taxonomy" id="163899"/>
</organismHost>
<organismHost>
    <name type="scientific">Solanum lycopersicum</name>
    <name type="common">Tomato</name>
    <name type="synonym">Lycopersicon esculentum</name>
    <dbReference type="NCBI Taxonomy" id="4081"/>
</organismHost>
<organismHost>
    <name type="scientific">Thrips tabaci</name>
    <dbReference type="NCBI Taxonomy" id="161014"/>
</organismHost>
<proteinExistence type="inferred from homology"/>
<protein>
    <recommendedName>
        <fullName>Nucleoprotein</fullName>
    </recommendedName>
    <alternativeName>
        <fullName>Nucleocapsid protein</fullName>
        <shortName>Protein N</shortName>
    </alternativeName>
</protein>